<feature type="chain" id="PRO_0000094172" description="CDP-archaeol synthase">
    <location>
        <begin position="1"/>
        <end position="175"/>
    </location>
</feature>
<feature type="transmembrane region" description="Helical" evidence="1">
    <location>
        <begin position="41"/>
        <end position="61"/>
    </location>
</feature>
<feature type="transmembrane region" description="Helical" evidence="1">
    <location>
        <begin position="82"/>
        <end position="102"/>
    </location>
</feature>
<feature type="transmembrane region" description="Helical" evidence="1">
    <location>
        <begin position="122"/>
        <end position="142"/>
    </location>
</feature>
<feature type="transmembrane region" description="Helical" evidence="1">
    <location>
        <begin position="150"/>
        <end position="170"/>
    </location>
</feature>
<proteinExistence type="inferred from homology"/>
<comment type="function">
    <text evidence="1">Catalyzes the formation of CDP-2,3-bis-(O-geranylgeranyl)-sn-glycerol (CDP-archaeol) from 2,3-bis-(O-geranylgeranyl)-sn-glycerol 1-phosphate (DGGGP) and CTP. This reaction is the third ether-bond-formation step in the biosynthesis of archaeal membrane lipids.</text>
</comment>
<comment type="catalytic activity">
    <reaction evidence="1">
        <text>2,3-bis-O-(geranylgeranyl)-sn-glycerol 1-phosphate + CTP + H(+) = CDP-2,3-bis-O-(geranylgeranyl)-sn-glycerol + diphosphate</text>
        <dbReference type="Rhea" id="RHEA:25690"/>
        <dbReference type="ChEBI" id="CHEBI:15378"/>
        <dbReference type="ChEBI" id="CHEBI:33019"/>
        <dbReference type="ChEBI" id="CHEBI:37563"/>
        <dbReference type="ChEBI" id="CHEBI:58837"/>
        <dbReference type="ChEBI" id="CHEBI:58838"/>
        <dbReference type="EC" id="2.7.7.67"/>
    </reaction>
</comment>
<comment type="cofactor">
    <cofactor evidence="1">
        <name>Mg(2+)</name>
        <dbReference type="ChEBI" id="CHEBI:18420"/>
    </cofactor>
</comment>
<comment type="pathway">
    <text evidence="1">Membrane lipid metabolism; glycerophospholipid metabolism.</text>
</comment>
<comment type="subcellular location">
    <subcellularLocation>
        <location evidence="1">Cell membrane</location>
        <topology evidence="1">Multi-pass membrane protein</topology>
    </subcellularLocation>
</comment>
<comment type="similarity">
    <text evidence="1">Belongs to the CDP-archaeol synthase family.</text>
</comment>
<evidence type="ECO:0000255" key="1">
    <source>
        <dbReference type="HAMAP-Rule" id="MF_01117"/>
    </source>
</evidence>
<protein>
    <recommendedName>
        <fullName evidence="1">CDP-archaeol synthase</fullName>
        <ecNumber evidence="1">2.7.7.67</ecNumber>
    </recommendedName>
    <alternativeName>
        <fullName evidence="1">CDP-2,3-bis-(O-geranylgeranyl)-sn-glycerol synthase</fullName>
    </alternativeName>
</protein>
<accession>Q8Q0J5</accession>
<dbReference type="EC" id="2.7.7.67" evidence="1"/>
<dbReference type="EMBL" id="AE008384">
    <property type="protein sequence ID" value="AAM29837.1"/>
    <property type="molecule type" value="Genomic_DNA"/>
</dbReference>
<dbReference type="SMR" id="Q8Q0J5"/>
<dbReference type="KEGG" id="mma:MM_0141"/>
<dbReference type="PATRIC" id="fig|192952.21.peg.163"/>
<dbReference type="eggNOG" id="arCOG04106">
    <property type="taxonomic scope" value="Archaea"/>
</dbReference>
<dbReference type="HOGENOM" id="CLU_105710_0_0_2"/>
<dbReference type="UniPathway" id="UPA00940"/>
<dbReference type="Proteomes" id="UP000000595">
    <property type="component" value="Chromosome"/>
</dbReference>
<dbReference type="GO" id="GO:0005886">
    <property type="term" value="C:plasma membrane"/>
    <property type="evidence" value="ECO:0007669"/>
    <property type="project" value="UniProtKB-SubCell"/>
</dbReference>
<dbReference type="GO" id="GO:0043338">
    <property type="term" value="F:CDP-2,3-bis-(O-geranylgeranyl)-sn-glycerol synthase activity"/>
    <property type="evidence" value="ECO:0007669"/>
    <property type="project" value="UniProtKB-EC"/>
</dbReference>
<dbReference type="GO" id="GO:0046474">
    <property type="term" value="P:glycerophospholipid biosynthetic process"/>
    <property type="evidence" value="ECO:0007669"/>
    <property type="project" value="UniProtKB-UniRule"/>
</dbReference>
<dbReference type="HAMAP" id="MF_01117">
    <property type="entry name" value="CDP_archaeol_synth"/>
    <property type="match status" value="1"/>
</dbReference>
<dbReference type="InterPro" id="IPR032690">
    <property type="entry name" value="CarS"/>
</dbReference>
<dbReference type="InterPro" id="IPR002726">
    <property type="entry name" value="CarS_archaea"/>
</dbReference>
<dbReference type="NCBIfam" id="NF003114">
    <property type="entry name" value="PRK04032.1"/>
    <property type="match status" value="1"/>
</dbReference>
<dbReference type="PANTHER" id="PTHR39650">
    <property type="entry name" value="CDP-ARCHAEOL SYNTHASE"/>
    <property type="match status" value="1"/>
</dbReference>
<dbReference type="PANTHER" id="PTHR39650:SF1">
    <property type="entry name" value="CDP-ARCHAEOL SYNTHASE"/>
    <property type="match status" value="1"/>
</dbReference>
<dbReference type="Pfam" id="PF01864">
    <property type="entry name" value="CarS-like"/>
    <property type="match status" value="1"/>
</dbReference>
<name>CDPAS_METMA</name>
<gene>
    <name evidence="1" type="primary">carS</name>
    <name type="ordered locus">MM_0141</name>
</gene>
<organism>
    <name type="scientific">Methanosarcina mazei (strain ATCC BAA-159 / DSM 3647 / Goe1 / Go1 / JCM 11833 / OCM 88)</name>
    <name type="common">Methanosarcina frisia</name>
    <dbReference type="NCBI Taxonomy" id="192952"/>
    <lineage>
        <taxon>Archaea</taxon>
        <taxon>Methanobacteriati</taxon>
        <taxon>Methanobacteriota</taxon>
        <taxon>Stenosarchaea group</taxon>
        <taxon>Methanomicrobia</taxon>
        <taxon>Methanosarcinales</taxon>
        <taxon>Methanosarcinaceae</taxon>
        <taxon>Methanosarcina</taxon>
    </lineage>
</organism>
<reference key="1">
    <citation type="journal article" date="2002" name="J. Mol. Microbiol. Biotechnol.">
        <title>The genome of Methanosarcina mazei: evidence for lateral gene transfer between Bacteria and Archaea.</title>
        <authorList>
            <person name="Deppenmeier U."/>
            <person name="Johann A."/>
            <person name="Hartsch T."/>
            <person name="Merkl R."/>
            <person name="Schmitz R.A."/>
            <person name="Martinez-Arias R."/>
            <person name="Henne A."/>
            <person name="Wiezer A."/>
            <person name="Baeumer S."/>
            <person name="Jacobi C."/>
            <person name="Brueggemann H."/>
            <person name="Lienard T."/>
            <person name="Christmann A."/>
            <person name="Boemecke M."/>
            <person name="Steckel S."/>
            <person name="Bhattacharyya A."/>
            <person name="Lykidis A."/>
            <person name="Overbeek R."/>
            <person name="Klenk H.-P."/>
            <person name="Gunsalus R.P."/>
            <person name="Fritz H.-J."/>
            <person name="Gottschalk G."/>
        </authorList>
    </citation>
    <scope>NUCLEOTIDE SEQUENCE [LARGE SCALE GENOMIC DNA]</scope>
    <source>
        <strain>ATCC BAA-159 / DSM 3647 / Goe1 / Go1 / JCM 11833 / OCM 88</strain>
    </source>
</reference>
<sequence length="175" mass="19180">MIPAYLSNPFAAVFGGGKPIDGGRTYKDGRRILGDGKTYRGLFSGIFCGFLAGCVEVWLSFRGFEILGIEMPGFGPDYTSSLIVVLALASGALFGDMFKSFFKRRMGLKRGASLPLVDQLDFVVGAWVFTYLAAPEWFVSNFTPGIMLTVIIITPLLHLTTNIIGYFIGVKKEPW</sequence>
<keyword id="KW-1003">Cell membrane</keyword>
<keyword id="KW-0444">Lipid biosynthesis</keyword>
<keyword id="KW-0443">Lipid metabolism</keyword>
<keyword id="KW-0460">Magnesium</keyword>
<keyword id="KW-0472">Membrane</keyword>
<keyword id="KW-0594">Phospholipid biosynthesis</keyword>
<keyword id="KW-1208">Phospholipid metabolism</keyword>
<keyword id="KW-0808">Transferase</keyword>
<keyword id="KW-0812">Transmembrane</keyword>
<keyword id="KW-1133">Transmembrane helix</keyword>